<name>COMD1_HUMAN</name>
<feature type="initiator methionine" description="Removed" evidence="37">
    <location>
        <position position="1"/>
    </location>
</feature>
<feature type="chain" id="PRO_0000077384" description="COMM domain-containing protein 1">
    <location>
        <begin position="2"/>
        <end position="190"/>
    </location>
</feature>
<feature type="domain" description="COMM" evidence="2">
    <location>
        <begin position="118"/>
        <end position="186"/>
    </location>
</feature>
<feature type="region of interest" description="Sufficient for interaction with SLC12A2" evidence="23">
    <location>
        <begin position="2"/>
        <end position="123"/>
    </location>
</feature>
<feature type="region of interest" description="Required for binding to PtdIns(4,5)P2" evidence="13">
    <location>
        <begin position="125"/>
        <end position="190"/>
    </location>
</feature>
<feature type="binding site" evidence="1">
    <location>
        <position position="101"/>
    </location>
    <ligand>
        <name>Cu cation</name>
        <dbReference type="ChEBI" id="CHEBI:23378"/>
    </ligand>
</feature>
<feature type="binding site" evidence="1">
    <location>
        <position position="110"/>
    </location>
    <ligand>
        <name>Cu cation</name>
        <dbReference type="ChEBI" id="CHEBI:23378"/>
    </ligand>
</feature>
<feature type="binding site" evidence="1">
    <location>
        <position position="134"/>
    </location>
    <ligand>
        <name>Cu cation</name>
        <dbReference type="ChEBI" id="CHEBI:23378"/>
    </ligand>
</feature>
<feature type="modified residue" description="N-acetylalanine" evidence="37">
    <location>
        <position position="2"/>
    </location>
</feature>
<feature type="splice variant" id="VSP_055532" description="In isoform 2." evidence="31">
    <original>ESEFLCLEFDEVKVNQILKTLSEVEESISTLISQPN</original>
    <variation>VHCNQ</variation>
    <location>
        <begin position="155"/>
        <end position="190"/>
    </location>
</feature>
<feature type="mutagenesis site" description="Reduces copper-induced fluorescence change." evidence="10">
    <original>M</original>
    <variation>A</variation>
    <location>
        <position position="110"/>
    </location>
</feature>
<feature type="mutagenesis site" description="Reduces copper-induced fluorescence change." evidence="10">
    <original>H</original>
    <variation>A</variation>
    <location>
        <position position="134"/>
    </location>
</feature>
<feature type="turn" evidence="39">
    <location>
        <begin position="3"/>
        <end position="5"/>
    </location>
</feature>
<feature type="helix" evidence="39">
    <location>
        <begin position="9"/>
        <end position="23"/>
    </location>
</feature>
<feature type="helix" evidence="39">
    <location>
        <begin position="32"/>
        <end position="39"/>
    </location>
</feature>
<feature type="strand" evidence="38">
    <location>
        <begin position="41"/>
        <end position="43"/>
    </location>
</feature>
<feature type="helix" evidence="39">
    <location>
        <begin position="45"/>
        <end position="65"/>
    </location>
</feature>
<feature type="helix" evidence="39">
    <location>
        <begin position="69"/>
        <end position="80"/>
    </location>
</feature>
<feature type="strand" evidence="38">
    <location>
        <begin position="82"/>
        <end position="84"/>
    </location>
</feature>
<feature type="helix" evidence="39">
    <location>
        <begin position="88"/>
        <end position="112"/>
    </location>
</feature>
<feature type="strand" evidence="39">
    <location>
        <begin position="118"/>
        <end position="134"/>
    </location>
</feature>
<feature type="strand" evidence="39">
    <location>
        <begin position="141"/>
        <end position="150"/>
    </location>
</feature>
<feature type="strand" evidence="39">
    <location>
        <begin position="157"/>
        <end position="163"/>
    </location>
</feature>
<feature type="helix" evidence="39">
    <location>
        <begin position="165"/>
        <end position="187"/>
    </location>
</feature>
<accession>Q8N668</accession>
<accession>B4DFQ4</accession>
<accession>Q96GS0</accession>
<evidence type="ECO:0000255" key="1"/>
<evidence type="ECO:0000255" key="2">
    <source>
        <dbReference type="PROSITE-ProRule" id="PRU00602"/>
    </source>
</evidence>
<evidence type="ECO:0000269" key="3">
    <source>
    </source>
</evidence>
<evidence type="ECO:0000269" key="4">
    <source>
    </source>
</evidence>
<evidence type="ECO:0000269" key="5">
    <source>
    </source>
</evidence>
<evidence type="ECO:0000269" key="6">
    <source>
    </source>
</evidence>
<evidence type="ECO:0000269" key="7">
    <source>
    </source>
</evidence>
<evidence type="ECO:0000269" key="8">
    <source>
    </source>
</evidence>
<evidence type="ECO:0000269" key="9">
    <source>
    </source>
</evidence>
<evidence type="ECO:0000269" key="10">
    <source>
    </source>
</evidence>
<evidence type="ECO:0000269" key="11">
    <source>
    </source>
</evidence>
<evidence type="ECO:0000269" key="12">
    <source>
    </source>
</evidence>
<evidence type="ECO:0000269" key="13">
    <source>
    </source>
</evidence>
<evidence type="ECO:0000269" key="14">
    <source>
    </source>
</evidence>
<evidence type="ECO:0000269" key="15">
    <source>
    </source>
</evidence>
<evidence type="ECO:0000269" key="16">
    <source>
    </source>
</evidence>
<evidence type="ECO:0000269" key="17">
    <source>
    </source>
</evidence>
<evidence type="ECO:0000269" key="18">
    <source>
    </source>
</evidence>
<evidence type="ECO:0000269" key="19">
    <source>
    </source>
</evidence>
<evidence type="ECO:0000269" key="20">
    <source>
    </source>
</evidence>
<evidence type="ECO:0000269" key="21">
    <source>
    </source>
</evidence>
<evidence type="ECO:0000269" key="22">
    <source>
    </source>
</evidence>
<evidence type="ECO:0000269" key="23">
    <source>
    </source>
</evidence>
<evidence type="ECO:0000269" key="24">
    <source>
    </source>
</evidence>
<evidence type="ECO:0000269" key="25">
    <source>
    </source>
</evidence>
<evidence type="ECO:0000269" key="26">
    <source>
    </source>
</evidence>
<evidence type="ECO:0000269" key="27">
    <source>
    </source>
</evidence>
<evidence type="ECO:0000269" key="28">
    <source>
    </source>
</evidence>
<evidence type="ECO:0000269" key="29">
    <source>
    </source>
</evidence>
<evidence type="ECO:0000269" key="30">
    <source>
    </source>
</evidence>
<evidence type="ECO:0000303" key="31">
    <source>
    </source>
</evidence>
<evidence type="ECO:0000305" key="32"/>
<evidence type="ECO:0007744" key="33">
    <source>
        <dbReference type="PDB" id="2H2M"/>
    </source>
</evidence>
<evidence type="ECO:0007744" key="34">
    <source>
        <dbReference type="PDB" id="8F2R"/>
    </source>
</evidence>
<evidence type="ECO:0007744" key="35">
    <source>
        <dbReference type="PDB" id="8F2U"/>
    </source>
</evidence>
<evidence type="ECO:0007744" key="36">
    <source>
        <dbReference type="PDB" id="8P0W"/>
    </source>
</evidence>
<evidence type="ECO:0007744" key="37">
    <source>
    </source>
</evidence>
<evidence type="ECO:0007829" key="38">
    <source>
        <dbReference type="PDB" id="2H2M"/>
    </source>
</evidence>
<evidence type="ECO:0007829" key="39">
    <source>
        <dbReference type="PDB" id="8P0W"/>
    </source>
</evidence>
<proteinExistence type="evidence at protein level"/>
<dbReference type="EMBL" id="AB178811">
    <property type="protein sequence ID" value="BAD18972.1"/>
    <property type="molecule type" value="mRNA"/>
</dbReference>
<dbReference type="EMBL" id="AK294203">
    <property type="protein sequence ID" value="BAG57515.1"/>
    <property type="molecule type" value="mRNA"/>
</dbReference>
<dbReference type="EMBL" id="AC018462">
    <property type="status" value="NOT_ANNOTATED_CDS"/>
    <property type="molecule type" value="Genomic_DNA"/>
</dbReference>
<dbReference type="EMBL" id="AC107081">
    <property type="status" value="NOT_ANNOTATED_CDS"/>
    <property type="molecule type" value="Genomic_DNA"/>
</dbReference>
<dbReference type="EMBL" id="AC116652">
    <property type="status" value="NOT_ANNOTATED_CDS"/>
    <property type="molecule type" value="Genomic_DNA"/>
</dbReference>
<dbReference type="EMBL" id="BC009266">
    <property type="protein sequence ID" value="AAH09266.2"/>
    <property type="molecule type" value="mRNA"/>
</dbReference>
<dbReference type="EMBL" id="BC022046">
    <property type="protein sequence ID" value="AAH22046.1"/>
    <property type="molecule type" value="mRNA"/>
</dbReference>
<dbReference type="CCDS" id="CCDS1869.1">
    <molecule id="Q8N668-1"/>
</dbReference>
<dbReference type="RefSeq" id="NP_689729.1">
    <molecule id="Q8N668-1"/>
    <property type="nucleotide sequence ID" value="NM_152516.4"/>
</dbReference>
<dbReference type="PDB" id="2H2M">
    <property type="method" value="NMR"/>
    <property type="chains" value="A=1-108"/>
</dbReference>
<dbReference type="PDB" id="8F2R">
    <property type="method" value="EM"/>
    <property type="resolution" value="3.12 A"/>
    <property type="chains" value="A=1-187"/>
</dbReference>
<dbReference type="PDB" id="8F2U">
    <property type="method" value="EM"/>
    <property type="resolution" value="3.53 A"/>
    <property type="chains" value="A=1-190"/>
</dbReference>
<dbReference type="PDB" id="8P0W">
    <property type="method" value="EM"/>
    <property type="resolution" value="2.90 A"/>
    <property type="chains" value="A=1-190"/>
</dbReference>
<dbReference type="PDBsum" id="2H2M"/>
<dbReference type="PDBsum" id="8F2R"/>
<dbReference type="PDBsum" id="8F2U"/>
<dbReference type="PDBsum" id="8P0W"/>
<dbReference type="BMRB" id="Q8N668"/>
<dbReference type="EMDB" id="EMD-17340"/>
<dbReference type="EMDB" id="EMD-17342"/>
<dbReference type="EMDB" id="EMD-28825"/>
<dbReference type="EMDB" id="EMD-28827"/>
<dbReference type="SMR" id="Q8N668"/>
<dbReference type="BioGRID" id="127317">
    <property type="interactions" value="126"/>
</dbReference>
<dbReference type="ComplexPortal" id="CPX-2211">
    <property type="entry name" value="Commander complex"/>
</dbReference>
<dbReference type="CORUM" id="Q8N668"/>
<dbReference type="FunCoup" id="Q8N668">
    <property type="interactions" value="1155"/>
</dbReference>
<dbReference type="IntAct" id="Q8N668">
    <property type="interactions" value="93"/>
</dbReference>
<dbReference type="MINT" id="Q8N668"/>
<dbReference type="STRING" id="9606.ENSP00000308236"/>
<dbReference type="iPTMnet" id="Q8N668"/>
<dbReference type="PhosphoSitePlus" id="Q8N668"/>
<dbReference type="BioMuta" id="COMMD1"/>
<dbReference type="DMDM" id="51316026"/>
<dbReference type="jPOST" id="Q8N668"/>
<dbReference type="MassIVE" id="Q8N668"/>
<dbReference type="PaxDb" id="9606-ENSP00000308236"/>
<dbReference type="PeptideAtlas" id="Q8N668"/>
<dbReference type="ProteomicsDB" id="4066"/>
<dbReference type="ProteomicsDB" id="72135">
    <molecule id="Q8N668-1"/>
</dbReference>
<dbReference type="Pumba" id="Q8N668"/>
<dbReference type="Antibodypedia" id="30711">
    <property type="antibodies" value="450 antibodies from 32 providers"/>
</dbReference>
<dbReference type="DNASU" id="150684"/>
<dbReference type="Ensembl" id="ENST00000311832.6">
    <molecule id="Q8N668-1"/>
    <property type="protein sequence ID" value="ENSP00000308236.5"/>
    <property type="gene ID" value="ENSG00000173163.11"/>
</dbReference>
<dbReference type="GeneID" id="150684"/>
<dbReference type="KEGG" id="hsa:150684"/>
<dbReference type="MANE-Select" id="ENST00000311832.6">
    <property type="protein sequence ID" value="ENSP00000308236.5"/>
    <property type="RefSeq nucleotide sequence ID" value="NM_152516.4"/>
    <property type="RefSeq protein sequence ID" value="NP_689729.1"/>
</dbReference>
<dbReference type="UCSC" id="uc002sbp.4">
    <molecule id="Q8N668-1"/>
    <property type="organism name" value="human"/>
</dbReference>
<dbReference type="AGR" id="HGNC:23024"/>
<dbReference type="CTD" id="150684"/>
<dbReference type="DisGeNET" id="150684"/>
<dbReference type="GeneCards" id="COMMD1"/>
<dbReference type="HGNC" id="HGNC:23024">
    <property type="gene designation" value="COMMD1"/>
</dbReference>
<dbReference type="HPA" id="ENSG00000173163">
    <property type="expression patterns" value="Low tissue specificity"/>
</dbReference>
<dbReference type="MIM" id="607238">
    <property type="type" value="gene"/>
</dbReference>
<dbReference type="neXtProt" id="NX_Q8N668"/>
<dbReference type="OpenTargets" id="ENSG00000173163"/>
<dbReference type="PharmGKB" id="PA134891368"/>
<dbReference type="VEuPathDB" id="HostDB:ENSG00000173163"/>
<dbReference type="eggNOG" id="ENOG502RXN6">
    <property type="taxonomic scope" value="Eukaryota"/>
</dbReference>
<dbReference type="GeneTree" id="ENSGT00390000012029"/>
<dbReference type="HOGENOM" id="CLU_126878_0_0_1"/>
<dbReference type="InParanoid" id="Q8N668"/>
<dbReference type="OMA" id="MPTAIVE"/>
<dbReference type="OrthoDB" id="10251426at2759"/>
<dbReference type="PAN-GO" id="Q8N668">
    <property type="GO annotations" value="6 GO annotations based on evolutionary models"/>
</dbReference>
<dbReference type="PhylomeDB" id="Q8N668"/>
<dbReference type="TreeFam" id="TF332823"/>
<dbReference type="PathwayCommons" id="Q8N668"/>
<dbReference type="Reactome" id="R-HSA-8951664">
    <property type="pathway name" value="Neddylation"/>
</dbReference>
<dbReference type="SignaLink" id="Q8N668"/>
<dbReference type="SIGNOR" id="Q8N668"/>
<dbReference type="BioGRID-ORCS" id="150684">
    <property type="hits" value="10 hits in 1154 CRISPR screens"/>
</dbReference>
<dbReference type="ChiTaRS" id="COMMD1">
    <property type="organism name" value="human"/>
</dbReference>
<dbReference type="EvolutionaryTrace" id="Q8N668"/>
<dbReference type="GeneWiki" id="COMMD1"/>
<dbReference type="GenomeRNAi" id="150684"/>
<dbReference type="Pharos" id="Q8N668">
    <property type="development level" value="Tbio"/>
</dbReference>
<dbReference type="PRO" id="PR:Q8N668"/>
<dbReference type="Proteomes" id="UP000005640">
    <property type="component" value="Chromosome 2"/>
</dbReference>
<dbReference type="RNAct" id="Q8N668">
    <property type="molecule type" value="protein"/>
</dbReference>
<dbReference type="Bgee" id="ENSG00000173163">
    <property type="expression patterns" value="Expressed in left ventricle myocardium and 186 other cell types or tissues"/>
</dbReference>
<dbReference type="ExpressionAtlas" id="Q8N668">
    <property type="expression patterns" value="baseline and differential"/>
</dbReference>
<dbReference type="GO" id="GO:0031462">
    <property type="term" value="C:Cul2-RING ubiquitin ligase complex"/>
    <property type="evidence" value="ECO:0000314"/>
    <property type="project" value="UniProtKB"/>
</dbReference>
<dbReference type="GO" id="GO:0005737">
    <property type="term" value="C:cytoplasm"/>
    <property type="evidence" value="ECO:0000314"/>
    <property type="project" value="UniProtKB"/>
</dbReference>
<dbReference type="GO" id="GO:0005829">
    <property type="term" value="C:cytosol"/>
    <property type="evidence" value="ECO:0000314"/>
    <property type="project" value="HPA"/>
</dbReference>
<dbReference type="GO" id="GO:0005769">
    <property type="term" value="C:early endosome"/>
    <property type="evidence" value="ECO:0000314"/>
    <property type="project" value="UniProtKB"/>
</dbReference>
<dbReference type="GO" id="GO:0005768">
    <property type="term" value="C:endosome"/>
    <property type="evidence" value="ECO:0000318"/>
    <property type="project" value="GO_Central"/>
</dbReference>
<dbReference type="GO" id="GO:0010008">
    <property type="term" value="C:endosome membrane"/>
    <property type="evidence" value="ECO:0007669"/>
    <property type="project" value="UniProtKB-SubCell"/>
</dbReference>
<dbReference type="GO" id="GO:0005654">
    <property type="term" value="C:nucleoplasm"/>
    <property type="evidence" value="ECO:0000314"/>
    <property type="project" value="HPA"/>
</dbReference>
<dbReference type="GO" id="GO:0005634">
    <property type="term" value="C:nucleus"/>
    <property type="evidence" value="ECO:0000314"/>
    <property type="project" value="UniProtKB"/>
</dbReference>
<dbReference type="GO" id="GO:0055037">
    <property type="term" value="C:recycling endosome"/>
    <property type="evidence" value="ECO:0000314"/>
    <property type="project" value="UniProtKB"/>
</dbReference>
<dbReference type="GO" id="GO:0005507">
    <property type="term" value="F:copper ion binding"/>
    <property type="evidence" value="ECO:0000314"/>
    <property type="project" value="UniProtKB"/>
</dbReference>
<dbReference type="GO" id="GO:0042802">
    <property type="term" value="F:identical protein binding"/>
    <property type="evidence" value="ECO:0000353"/>
    <property type="project" value="IntAct"/>
</dbReference>
<dbReference type="GO" id="GO:0070300">
    <property type="term" value="F:phosphatidic acid binding"/>
    <property type="evidence" value="ECO:0000314"/>
    <property type="project" value="UniProtKB"/>
</dbReference>
<dbReference type="GO" id="GO:0005547">
    <property type="term" value="F:phosphatidylinositol-3,4,5-trisphosphate binding"/>
    <property type="evidence" value="ECO:0000314"/>
    <property type="project" value="UniProtKB"/>
</dbReference>
<dbReference type="GO" id="GO:0043325">
    <property type="term" value="F:phosphatidylinositol-3,4-bisphosphate binding"/>
    <property type="evidence" value="ECO:0000314"/>
    <property type="project" value="UniProtKB"/>
</dbReference>
<dbReference type="GO" id="GO:0080025">
    <property type="term" value="F:phosphatidylinositol-3,5-bisphosphate binding"/>
    <property type="evidence" value="ECO:0000314"/>
    <property type="project" value="UniProtKB"/>
</dbReference>
<dbReference type="GO" id="GO:0005546">
    <property type="term" value="F:phosphatidylinositol-4,5-bisphosphate binding"/>
    <property type="evidence" value="ECO:0000314"/>
    <property type="project" value="UniProtKB"/>
</dbReference>
<dbReference type="GO" id="GO:0042803">
    <property type="term" value="F:protein homodimerization activity"/>
    <property type="evidence" value="ECO:0000353"/>
    <property type="project" value="UniProtKB"/>
</dbReference>
<dbReference type="GO" id="GO:0019871">
    <property type="term" value="F:sodium channel inhibitor activity"/>
    <property type="evidence" value="ECO:0000314"/>
    <property type="project" value="MGI"/>
</dbReference>
<dbReference type="GO" id="GO:0042632">
    <property type="term" value="P:cholesterol homeostasis"/>
    <property type="evidence" value="ECO:0007669"/>
    <property type="project" value="Ensembl"/>
</dbReference>
<dbReference type="GO" id="GO:0055070">
    <property type="term" value="P:copper ion homeostasis"/>
    <property type="evidence" value="ECO:0000314"/>
    <property type="project" value="UniProtKB"/>
</dbReference>
<dbReference type="GO" id="GO:0006893">
    <property type="term" value="P:Golgi to plasma membrane transport"/>
    <property type="evidence" value="ECO:0000315"/>
    <property type="project" value="UniProtKB"/>
</dbReference>
<dbReference type="GO" id="GO:0034383">
    <property type="term" value="P:low-density lipoprotein particle clearance"/>
    <property type="evidence" value="ECO:0007669"/>
    <property type="project" value="Ensembl"/>
</dbReference>
<dbReference type="GO" id="GO:1902072">
    <property type="term" value="P:negative regulation of hypoxia-inducible factor-1alpha signaling pathway"/>
    <property type="evidence" value="ECO:0007669"/>
    <property type="project" value="Ensembl"/>
</dbReference>
<dbReference type="GO" id="GO:0032088">
    <property type="term" value="P:negative regulation of NF-kappaB transcription factor activity"/>
    <property type="evidence" value="ECO:0000314"/>
    <property type="project" value="UniProtKB"/>
</dbReference>
<dbReference type="GO" id="GO:2000009">
    <property type="term" value="P:negative regulation of protein localization to cell surface"/>
    <property type="evidence" value="ECO:0000314"/>
    <property type="project" value="UniProtKB"/>
</dbReference>
<dbReference type="GO" id="GO:1902306">
    <property type="term" value="P:negative regulation of sodium ion transmembrane transport"/>
    <property type="evidence" value="ECO:0000314"/>
    <property type="project" value="UniProtKB"/>
</dbReference>
<dbReference type="GO" id="GO:0006289">
    <property type="term" value="P:nucleotide-excision repair"/>
    <property type="evidence" value="ECO:0000315"/>
    <property type="project" value="CACAO"/>
</dbReference>
<dbReference type="GO" id="GO:0048227">
    <property type="term" value="P:plasma membrane to endosome transport"/>
    <property type="evidence" value="ECO:0000314"/>
    <property type="project" value="UniProtKB"/>
</dbReference>
<dbReference type="GO" id="GO:1904109">
    <property type="term" value="P:positive regulation of cholesterol import"/>
    <property type="evidence" value="ECO:0007669"/>
    <property type="project" value="Ensembl"/>
</dbReference>
<dbReference type="GO" id="GO:1905751">
    <property type="term" value="P:positive regulation of endosome to plasma membrane protein transport"/>
    <property type="evidence" value="ECO:0007669"/>
    <property type="project" value="Ensembl"/>
</dbReference>
<dbReference type="GO" id="GO:2000010">
    <property type="term" value="P:positive regulation of protein localization to cell surface"/>
    <property type="evidence" value="ECO:0007669"/>
    <property type="project" value="Ensembl"/>
</dbReference>
<dbReference type="GO" id="GO:0031398">
    <property type="term" value="P:positive regulation of protein ubiquitination"/>
    <property type="evidence" value="ECO:0000314"/>
    <property type="project" value="UniProtKB"/>
</dbReference>
<dbReference type="GO" id="GO:0031648">
    <property type="term" value="P:protein destabilization"/>
    <property type="evidence" value="ECO:0007669"/>
    <property type="project" value="Ensembl"/>
</dbReference>
<dbReference type="GO" id="GO:0034394">
    <property type="term" value="P:protein localization to cell surface"/>
    <property type="evidence" value="ECO:0007669"/>
    <property type="project" value="Ensembl"/>
</dbReference>
<dbReference type="GO" id="GO:0015031">
    <property type="term" value="P:protein transport"/>
    <property type="evidence" value="ECO:0007669"/>
    <property type="project" value="UniProtKB-KW"/>
</dbReference>
<dbReference type="GO" id="GO:0032434">
    <property type="term" value="P:regulation of proteasomal ubiquitin-dependent protein catabolic process"/>
    <property type="evidence" value="ECO:0000315"/>
    <property type="project" value="UniProtKB"/>
</dbReference>
<dbReference type="CDD" id="cd04749">
    <property type="entry name" value="Commd1_MURR1"/>
    <property type="match status" value="1"/>
</dbReference>
<dbReference type="InterPro" id="IPR017920">
    <property type="entry name" value="COMM"/>
</dbReference>
<dbReference type="InterPro" id="IPR033776">
    <property type="entry name" value="COMMD1_N"/>
</dbReference>
<dbReference type="InterPro" id="IPR037351">
    <property type="entry name" value="Murr1"/>
</dbReference>
<dbReference type="PANTHER" id="PTHR21199">
    <property type="entry name" value="COMM DOMAIN-CONTAINING PROTEIN 1"/>
    <property type="match status" value="1"/>
</dbReference>
<dbReference type="PANTHER" id="PTHR21199:SF1">
    <property type="entry name" value="COMM DOMAIN-CONTAINING PROTEIN 1"/>
    <property type="match status" value="1"/>
</dbReference>
<dbReference type="Pfam" id="PF07258">
    <property type="entry name" value="COMM_domain"/>
    <property type="match status" value="1"/>
</dbReference>
<dbReference type="Pfam" id="PF17221">
    <property type="entry name" value="COMMD1_N"/>
    <property type="match status" value="1"/>
</dbReference>
<dbReference type="PROSITE" id="PS51269">
    <property type="entry name" value="COMM"/>
    <property type="match status" value="1"/>
</dbReference>
<reference key="1">
    <citation type="journal article" date="2003" name="J. Hepatol.">
        <title>The canine copper toxicosis gene MURR1 does not cause non-Wilsonian hepatic copper toxicosis.</title>
        <authorList>
            <person name="Mueller T."/>
            <person name="van de Sluis B.A.J."/>
            <person name="Zhernakova A."/>
            <person name="van Binsbergen E."/>
            <person name="Janecke A.R."/>
            <person name="Bavdekar A."/>
            <person name="Pandit A."/>
            <person name="Weirich-Schwaiger H."/>
            <person name="Witt H."/>
            <person name="Ellemunter H."/>
            <person name="Deutsch J."/>
            <person name="Denk H."/>
            <person name="Mueller W."/>
            <person name="Sternlieb I."/>
            <person name="Tanner M.S."/>
            <person name="Wijmenga C."/>
        </authorList>
    </citation>
    <scope>NUCLEOTIDE SEQUENCE [MRNA] (ISOFORM 1)</scope>
</reference>
<reference key="2">
    <citation type="journal article" date="2004" name="J. Mol. Med.">
        <title>Analysis of the human homologue of the canine copper toxicosis gene MURR1 in Wilson disease patients.</title>
        <authorList>
            <person name="Stuehler B."/>
            <person name="Reichert J."/>
            <person name="Stremmel W."/>
            <person name="Schaefer M."/>
        </authorList>
    </citation>
    <scope>NUCLEOTIDE SEQUENCE [MRNA] (ISOFORM 1)</scope>
</reference>
<reference key="3">
    <citation type="submission" date="2004-05" db="EMBL/GenBank/DDBJ databases">
        <title>Comparative analyses of gene imprinting and CpG island methylation around mouse Murr1 and human syntenic region identify the 5'-portion of U2af1-rs1 CpG island as an imprinting control region.</title>
        <authorList>
            <person name="Zhang Z."/>
            <person name="Yatsuki H."/>
            <person name="Wang Y."/>
            <person name="Joh K."/>
            <person name="Nabetani A."/>
            <person name="Hatada I."/>
            <person name="Soejima H."/>
            <person name="Iwasaka T."/>
            <person name="Mukai T."/>
        </authorList>
    </citation>
    <scope>NUCLEOTIDE SEQUENCE [MRNA] (ISOFORM 1)</scope>
    <source>
        <tissue>Kidney</tissue>
    </source>
</reference>
<reference key="4">
    <citation type="journal article" date="2004" name="Nat. Genet.">
        <title>Complete sequencing and characterization of 21,243 full-length human cDNAs.</title>
        <authorList>
            <person name="Ota T."/>
            <person name="Suzuki Y."/>
            <person name="Nishikawa T."/>
            <person name="Otsuki T."/>
            <person name="Sugiyama T."/>
            <person name="Irie R."/>
            <person name="Wakamatsu A."/>
            <person name="Hayashi K."/>
            <person name="Sato H."/>
            <person name="Nagai K."/>
            <person name="Kimura K."/>
            <person name="Makita H."/>
            <person name="Sekine M."/>
            <person name="Obayashi M."/>
            <person name="Nishi T."/>
            <person name="Shibahara T."/>
            <person name="Tanaka T."/>
            <person name="Ishii S."/>
            <person name="Yamamoto J."/>
            <person name="Saito K."/>
            <person name="Kawai Y."/>
            <person name="Isono Y."/>
            <person name="Nakamura Y."/>
            <person name="Nagahari K."/>
            <person name="Murakami K."/>
            <person name="Yasuda T."/>
            <person name="Iwayanagi T."/>
            <person name="Wagatsuma M."/>
            <person name="Shiratori A."/>
            <person name="Sudo H."/>
            <person name="Hosoiri T."/>
            <person name="Kaku Y."/>
            <person name="Kodaira H."/>
            <person name="Kondo H."/>
            <person name="Sugawara M."/>
            <person name="Takahashi M."/>
            <person name="Kanda K."/>
            <person name="Yokoi T."/>
            <person name="Furuya T."/>
            <person name="Kikkawa E."/>
            <person name="Omura Y."/>
            <person name="Abe K."/>
            <person name="Kamihara K."/>
            <person name="Katsuta N."/>
            <person name="Sato K."/>
            <person name="Tanikawa M."/>
            <person name="Yamazaki M."/>
            <person name="Ninomiya K."/>
            <person name="Ishibashi T."/>
            <person name="Yamashita H."/>
            <person name="Murakawa K."/>
            <person name="Fujimori K."/>
            <person name="Tanai H."/>
            <person name="Kimata M."/>
            <person name="Watanabe M."/>
            <person name="Hiraoka S."/>
            <person name="Chiba Y."/>
            <person name="Ishida S."/>
            <person name="Ono Y."/>
            <person name="Takiguchi S."/>
            <person name="Watanabe S."/>
            <person name="Yosida M."/>
            <person name="Hotuta T."/>
            <person name="Kusano J."/>
            <person name="Kanehori K."/>
            <person name="Takahashi-Fujii A."/>
            <person name="Hara H."/>
            <person name="Tanase T.-O."/>
            <person name="Nomura Y."/>
            <person name="Togiya S."/>
            <person name="Komai F."/>
            <person name="Hara R."/>
            <person name="Takeuchi K."/>
            <person name="Arita M."/>
            <person name="Imose N."/>
            <person name="Musashino K."/>
            <person name="Yuuki H."/>
            <person name="Oshima A."/>
            <person name="Sasaki N."/>
            <person name="Aotsuka S."/>
            <person name="Yoshikawa Y."/>
            <person name="Matsunawa H."/>
            <person name="Ichihara T."/>
            <person name="Shiohata N."/>
            <person name="Sano S."/>
            <person name="Moriya S."/>
            <person name="Momiyama H."/>
            <person name="Satoh N."/>
            <person name="Takami S."/>
            <person name="Terashima Y."/>
            <person name="Suzuki O."/>
            <person name="Nakagawa S."/>
            <person name="Senoh A."/>
            <person name="Mizoguchi H."/>
            <person name="Goto Y."/>
            <person name="Shimizu F."/>
            <person name="Wakebe H."/>
            <person name="Hishigaki H."/>
            <person name="Watanabe T."/>
            <person name="Sugiyama A."/>
            <person name="Takemoto M."/>
            <person name="Kawakami B."/>
            <person name="Yamazaki M."/>
            <person name="Watanabe K."/>
            <person name="Kumagai A."/>
            <person name="Itakura S."/>
            <person name="Fukuzumi Y."/>
            <person name="Fujimori Y."/>
            <person name="Komiyama M."/>
            <person name="Tashiro H."/>
            <person name="Tanigami A."/>
            <person name="Fujiwara T."/>
            <person name="Ono T."/>
            <person name="Yamada K."/>
            <person name="Fujii Y."/>
            <person name="Ozaki K."/>
            <person name="Hirao M."/>
            <person name="Ohmori Y."/>
            <person name="Kawabata A."/>
            <person name="Hikiji T."/>
            <person name="Kobatake N."/>
            <person name="Inagaki H."/>
            <person name="Ikema Y."/>
            <person name="Okamoto S."/>
            <person name="Okitani R."/>
            <person name="Kawakami T."/>
            <person name="Noguchi S."/>
            <person name="Itoh T."/>
            <person name="Shigeta K."/>
            <person name="Senba T."/>
            <person name="Matsumura K."/>
            <person name="Nakajima Y."/>
            <person name="Mizuno T."/>
            <person name="Morinaga M."/>
            <person name="Sasaki M."/>
            <person name="Togashi T."/>
            <person name="Oyama M."/>
            <person name="Hata H."/>
            <person name="Watanabe M."/>
            <person name="Komatsu T."/>
            <person name="Mizushima-Sugano J."/>
            <person name="Satoh T."/>
            <person name="Shirai Y."/>
            <person name="Takahashi Y."/>
            <person name="Nakagawa K."/>
            <person name="Okumura K."/>
            <person name="Nagase T."/>
            <person name="Nomura N."/>
            <person name="Kikuchi H."/>
            <person name="Masuho Y."/>
            <person name="Yamashita R."/>
            <person name="Nakai K."/>
            <person name="Yada T."/>
            <person name="Nakamura Y."/>
            <person name="Ohara O."/>
            <person name="Isogai T."/>
            <person name="Sugano S."/>
        </authorList>
    </citation>
    <scope>NUCLEOTIDE SEQUENCE [LARGE SCALE MRNA] (ISOFORM 2)</scope>
    <source>
        <tissue>Amygdala</tissue>
    </source>
</reference>
<reference key="5">
    <citation type="journal article" date="2005" name="Nature">
        <title>Generation and annotation of the DNA sequences of human chromosomes 2 and 4.</title>
        <authorList>
            <person name="Hillier L.W."/>
            <person name="Graves T.A."/>
            <person name="Fulton R.S."/>
            <person name="Fulton L.A."/>
            <person name="Pepin K.H."/>
            <person name="Minx P."/>
            <person name="Wagner-McPherson C."/>
            <person name="Layman D."/>
            <person name="Wylie K."/>
            <person name="Sekhon M."/>
            <person name="Becker M.C."/>
            <person name="Fewell G.A."/>
            <person name="Delehaunty K.D."/>
            <person name="Miner T.L."/>
            <person name="Nash W.E."/>
            <person name="Kremitzki C."/>
            <person name="Oddy L."/>
            <person name="Du H."/>
            <person name="Sun H."/>
            <person name="Bradshaw-Cordum H."/>
            <person name="Ali J."/>
            <person name="Carter J."/>
            <person name="Cordes M."/>
            <person name="Harris A."/>
            <person name="Isak A."/>
            <person name="van Brunt A."/>
            <person name="Nguyen C."/>
            <person name="Du F."/>
            <person name="Courtney L."/>
            <person name="Kalicki J."/>
            <person name="Ozersky P."/>
            <person name="Abbott S."/>
            <person name="Armstrong J."/>
            <person name="Belter E.A."/>
            <person name="Caruso L."/>
            <person name="Cedroni M."/>
            <person name="Cotton M."/>
            <person name="Davidson T."/>
            <person name="Desai A."/>
            <person name="Elliott G."/>
            <person name="Erb T."/>
            <person name="Fronick C."/>
            <person name="Gaige T."/>
            <person name="Haakenson W."/>
            <person name="Haglund K."/>
            <person name="Holmes A."/>
            <person name="Harkins R."/>
            <person name="Kim K."/>
            <person name="Kruchowski S.S."/>
            <person name="Strong C.M."/>
            <person name="Grewal N."/>
            <person name="Goyea E."/>
            <person name="Hou S."/>
            <person name="Levy A."/>
            <person name="Martinka S."/>
            <person name="Mead K."/>
            <person name="McLellan M.D."/>
            <person name="Meyer R."/>
            <person name="Randall-Maher J."/>
            <person name="Tomlinson C."/>
            <person name="Dauphin-Kohlberg S."/>
            <person name="Kozlowicz-Reilly A."/>
            <person name="Shah N."/>
            <person name="Swearengen-Shahid S."/>
            <person name="Snider J."/>
            <person name="Strong J.T."/>
            <person name="Thompson J."/>
            <person name="Yoakum M."/>
            <person name="Leonard S."/>
            <person name="Pearman C."/>
            <person name="Trani L."/>
            <person name="Radionenko M."/>
            <person name="Waligorski J.E."/>
            <person name="Wang C."/>
            <person name="Rock S.M."/>
            <person name="Tin-Wollam A.-M."/>
            <person name="Maupin R."/>
            <person name="Latreille P."/>
            <person name="Wendl M.C."/>
            <person name="Yang S.-P."/>
            <person name="Pohl C."/>
            <person name="Wallis J.W."/>
            <person name="Spieth J."/>
            <person name="Bieri T.A."/>
            <person name="Berkowicz N."/>
            <person name="Nelson J.O."/>
            <person name="Osborne J."/>
            <person name="Ding L."/>
            <person name="Meyer R."/>
            <person name="Sabo A."/>
            <person name="Shotland Y."/>
            <person name="Sinha P."/>
            <person name="Wohldmann P.E."/>
            <person name="Cook L.L."/>
            <person name="Hickenbotham M.T."/>
            <person name="Eldred J."/>
            <person name="Williams D."/>
            <person name="Jones T.A."/>
            <person name="She X."/>
            <person name="Ciccarelli F.D."/>
            <person name="Izaurralde E."/>
            <person name="Taylor J."/>
            <person name="Schmutz J."/>
            <person name="Myers R.M."/>
            <person name="Cox D.R."/>
            <person name="Huang X."/>
            <person name="McPherson J.D."/>
            <person name="Mardis E.R."/>
            <person name="Clifton S.W."/>
            <person name="Warren W.C."/>
            <person name="Chinwalla A.T."/>
            <person name="Eddy S.R."/>
            <person name="Marra M.A."/>
            <person name="Ovcharenko I."/>
            <person name="Furey T.S."/>
            <person name="Miller W."/>
            <person name="Eichler E.E."/>
            <person name="Bork P."/>
            <person name="Suyama M."/>
            <person name="Torrents D."/>
            <person name="Waterston R.H."/>
            <person name="Wilson R.K."/>
        </authorList>
    </citation>
    <scope>NUCLEOTIDE SEQUENCE [LARGE SCALE GENOMIC DNA]</scope>
</reference>
<reference key="6">
    <citation type="journal article" date="2004" name="Genome Res.">
        <title>The status, quality, and expansion of the NIH full-length cDNA project: the Mammalian Gene Collection (MGC).</title>
        <authorList>
            <consortium name="The MGC Project Team"/>
        </authorList>
    </citation>
    <scope>NUCLEOTIDE SEQUENCE [LARGE SCALE MRNA] (ISOFORM 1)</scope>
    <source>
        <tissue>Ovary</tissue>
        <tissue>Skin</tissue>
    </source>
</reference>
<reference key="7">
    <citation type="journal article" date="2002" name="Hum. Mol. Genet.">
        <title>Identification of a new copper metabolism gene by positional cloning in a purebred dog population.</title>
        <authorList>
            <person name="van De Sluis B.A.J."/>
            <person name="Rothuizen J."/>
            <person name="Pearson P.L."/>
            <person name="van Oost B.A."/>
            <person name="Wijmenga C."/>
        </authorList>
    </citation>
    <scope>TISSUE SPECIFICITY</scope>
</reference>
<reference key="8">
    <citation type="journal article" date="2003" name="J. Biol. Chem.">
        <title>The copper toxicosis gene product Murr1 directly interacts with the Wilson disease protein.</title>
        <authorList>
            <person name="Tao T.Y."/>
            <person name="Liu F."/>
            <person name="Klomp L."/>
            <person name="Wijmenga C."/>
            <person name="Gitlin J.D."/>
        </authorList>
    </citation>
    <scope>INTERACTION WITH ATP7B</scope>
</reference>
<reference key="9">
    <citation type="journal article" date="2004" name="EMBO J.">
        <title>A novel role for XIAP in copper homeostasis through regulation of MURR1.</title>
        <authorList>
            <person name="Burstein E."/>
            <person name="Ganesh L."/>
            <person name="Dick R.D."/>
            <person name="van De Sluis B."/>
            <person name="Wilkinson J.C."/>
            <person name="Klomp L.W."/>
            <person name="Wijmenga C."/>
            <person name="Brewer G.J."/>
            <person name="Nabel G.J."/>
            <person name="Duckett C.S."/>
        </authorList>
    </citation>
    <scope>UBIQUITINATION BY XIAP</scope>
</reference>
<reference key="10">
    <citation type="journal article" date="2004" name="J. Biol. Chem.">
        <title>Identification of Murr1 as a regulator of the human delta epithelial sodium channel.</title>
        <authorList>
            <person name="Biasio W."/>
            <person name="Chang T."/>
            <person name="McIntosh C.J."/>
            <person name="McDonald F.J."/>
        </authorList>
    </citation>
    <scope>FUNCTION</scope>
    <scope>INTERACTION WITH SCNN1D</scope>
</reference>
<reference key="11">
    <citation type="journal article" date="2005" name="J. Biol. Chem.">
        <title>COMMD proteins, a novel family of structural and functional homologs of MURR1.</title>
        <authorList>
            <person name="Burstein E."/>
            <person name="Hoberg J.E."/>
            <person name="Wilkinson A.S."/>
            <person name="Rumble J.M."/>
            <person name="Csomos R.A."/>
            <person name="Komarck C.M."/>
            <person name="Maine G.N."/>
            <person name="Wilkinson J.C."/>
            <person name="Mayo M.W."/>
            <person name="Duckett C.S."/>
        </authorList>
    </citation>
    <scope>FUNCTION</scope>
    <scope>INTERACTION WITH RELA; REL; RELB; NFKB1; NFKB2; COMMD2; COMMD3; COMMD4; COMMD5; COMMD6; COMMD7; COMMD8 AND COMMD10</scope>
    <scope>SUBCELLULAR LOCATION</scope>
    <scope>TISSUE SPECIFICITY</scope>
</reference>
<reference key="12">
    <citation type="journal article" date="2006" name="Biochem. J.">
        <title>Characterization of COMMD protein-protein interactions in NF-kappaB signalling.</title>
        <authorList>
            <person name="de Bie P."/>
            <person name="van de Sluis B."/>
            <person name="Burstein E."/>
            <person name="Duran K.J."/>
            <person name="Berger R."/>
            <person name="Duckett C.S."/>
            <person name="Wijmenga C."/>
            <person name="Klomp L.W."/>
        </authorList>
    </citation>
    <scope>INTERACTION WITH COMMD6 AND NFKBIB</scope>
    <scope>SUBCELLULAR LOCATION</scope>
    <scope>TISSUE SPECIFICITY</scope>
</reference>
<reference key="13">
    <citation type="journal article" date="2007" name="Biochemistry">
        <title>Characterization and copper binding properties of human COMMD1 (MURR1).</title>
        <authorList>
            <person name="Narindrasorasak S."/>
            <person name="Kulkarni P."/>
            <person name="Deschamps P."/>
            <person name="She Y.M."/>
            <person name="Sarkar B."/>
        </authorList>
    </citation>
    <scope>FUNCTION</scope>
    <scope>SUBUNIT</scope>
    <scope>IDENTIFICATION BY MASS SPECTROMETRY</scope>
    <scope>MUTAGENESIS OF MET-110 AND HIS-134</scope>
    <scope>COPPER-BINDING</scope>
</reference>
<reference key="14">
    <citation type="journal article" date="2007" name="EMBO J.">
        <title>COMMD1 promotes the ubiquitination of NF-kappaB subunits through a cullin-containing ubiquitin ligase.</title>
        <authorList>
            <person name="Maine G.N."/>
            <person name="Mao X."/>
            <person name="Komarck C.M."/>
            <person name="Burstein E."/>
        </authorList>
    </citation>
    <scope>FUNCTION</scope>
    <scope>SUBUNIT</scope>
    <scope>INTERACTION WITH SOCS1 AND CUL2</scope>
    <scope>IDENTIFICATION IN AN E3 UBIQUITIN LIGASE COMPLEX COMPOSED OF TCEB1/ELONGIN C; CUL2; SOCS1 AND RBX1</scope>
</reference>
<reference key="15">
    <citation type="journal article" date="2007" name="Gastroenterology">
        <title>Distinct Wilson's disease mutations in ATP7B are associated with enhanced binding to COMMD1 and reduced stability of ATP7B.</title>
        <authorList>
            <person name="de Bie P."/>
            <person name="van de Sluis B."/>
            <person name="Burstein E."/>
            <person name="van de Berghe P.V."/>
            <person name="Muller P."/>
            <person name="Berger R."/>
            <person name="Gitlin J.D."/>
            <person name="Wijmenga C."/>
            <person name="Klomp L.W."/>
        </authorList>
    </citation>
    <scope>INTERACTION WITH ATP7B</scope>
</reference>
<reference key="16">
    <citation type="journal article" date="2008" name="J. Biol. Chem.">
        <title>Tumor suppressor ARF promotes non-classic proteasome-independent polyubiquitination of COMMD1.</title>
        <authorList>
            <person name="Huang Y."/>
            <person name="Wu M."/>
            <person name="Li H.Y."/>
        </authorList>
    </citation>
    <scope>UBIQUITINATION</scope>
    <scope>SUBCELLULAR LOCATION</scope>
    <scope>INTERACTION WITH CDKN2A</scope>
</reference>
<reference key="17">
    <citation type="journal article" date="2009" name="Anal. Chem.">
        <title>Lys-N and trypsin cover complementary parts of the phosphoproteome in a refined SCX-based approach.</title>
        <authorList>
            <person name="Gauci S."/>
            <person name="Helbig A.O."/>
            <person name="Slijper M."/>
            <person name="Krijgsveld J."/>
            <person name="Heck A.J."/>
            <person name="Mohammed S."/>
        </authorList>
    </citation>
    <scope>ACETYLATION [LARGE SCALE ANALYSIS] AT ALA-2</scope>
    <scope>CLEAVAGE OF INITIATOR METHIONINE [LARGE SCALE ANALYSIS]</scope>
    <scope>IDENTIFICATION BY MASS SPECTROMETRY [LARGE SCALE ANALYSIS]</scope>
</reference>
<reference key="18">
    <citation type="journal article" date="2009" name="J. Biol. Chem.">
        <title>COMMD1 forms oligomeric complexes targeted to the endocytic membranes via specific interactions with phosphatidylinositol 4,5-bisphosphate.</title>
        <authorList>
            <person name="Burkhead J.L."/>
            <person name="Morgan C.T."/>
            <person name="Shinde U."/>
            <person name="Haddock G."/>
            <person name="Lutsenko S."/>
        </authorList>
    </citation>
    <scope>FUNCTION</scope>
    <scope>SUBCELLULAR LOCATION</scope>
</reference>
<reference key="19">
    <citation type="journal article" date="2010" name="Am. J. Physiol.">
        <title>COMMD1 downregulates the epithelial sodium channel through Nedd4-2.</title>
        <authorList>
            <person name="Ke Y."/>
            <person name="Butt A.G."/>
            <person name="Swart M."/>
            <person name="Liu Y.F."/>
            <person name="McDonald F.J."/>
        </authorList>
    </citation>
    <scope>FUNCTION</scope>
    <scope>INTERACTION WITH SGK1 AND AKT1</scope>
</reference>
<reference key="20">
    <citation type="journal article" date="2010" name="Cancer Res.">
        <title>Nucleolar targeting of RelA(p65) is regulated by COMMD1-dependent ubiquitination.</title>
        <authorList>
            <person name="Thoms H.C."/>
            <person name="Loveridge C.J."/>
            <person name="Simpson J."/>
            <person name="Clipson A."/>
            <person name="Reinhardt K."/>
            <person name="Dunlop M.G."/>
            <person name="Stark L.A."/>
        </authorList>
    </citation>
    <scope>FUNCTION</scope>
</reference>
<reference key="21">
    <citation type="journal article" date="2010" name="J. Biol. Chem.">
        <title>Cu,Zn superoxide dismutase maturation and activity are regulated by COMMD1.</title>
        <authorList>
            <person name="Vonk W.I."/>
            <person name="Wijmenga C."/>
            <person name="Berger R."/>
            <person name="van de Sluis B."/>
            <person name="Klomp L.W."/>
        </authorList>
    </citation>
    <scope>FUNCTION</scope>
    <scope>INTERACTION WITH CCS</scope>
</reference>
<reference key="22">
    <citation type="journal article" date="2010" name="J. Clin. Invest.">
        <title>COMMD1 disrupts HIF-1alpha/beta dimerization and inhibits human tumor cell invasion.</title>
        <authorList>
            <person name="van de Sluis B."/>
            <person name="Mao X."/>
            <person name="Zhai Y."/>
            <person name="Groot A.J."/>
            <person name="Vermeulen J.F."/>
            <person name="van der Wall E."/>
            <person name="van Diest P.J."/>
            <person name="Hofker M.H."/>
            <person name="Wijmenga C."/>
            <person name="Klomp L.W."/>
            <person name="Cho K.R."/>
            <person name="Fearon E.R."/>
            <person name="Vooijs M."/>
            <person name="Burstein E."/>
        </authorList>
    </citation>
    <scope>FUNCTION</scope>
    <scope>INTERACTION WITH HIF1A</scope>
    <scope>TISSUE SPECIFICITY</scope>
</reference>
<reference key="23">
    <citation type="journal article" date="2010" name="Mol. Cancer Res.">
        <title>Clusterin facilitates COMMD1 and I-kappaB degradation to enhance NF-kappaB activity in prostate cancer cells.</title>
        <authorList>
            <person name="Zoubeidi A."/>
            <person name="Ettinger S."/>
            <person name="Beraldi E."/>
            <person name="Hadaschik B."/>
            <person name="Zardan A."/>
            <person name="Klomp L.W."/>
            <person name="Nelson C.C."/>
            <person name="Rennie P.S."/>
            <person name="Gleave M.E."/>
        </authorList>
    </citation>
    <scope>SUBCELLULAR LOCATION</scope>
    <scope>UBIQUITINATION</scope>
    <scope>PROTEASOMAL DEGRADATION</scope>
    <scope>INTERACTION WITH CLU</scope>
</reference>
<reference key="24">
    <citation type="journal article" date="2011" name="BMC Syst. Biol.">
        <title>Initial characterization of the human central proteome.</title>
        <authorList>
            <person name="Burkard T.R."/>
            <person name="Planyavsky M."/>
            <person name="Kaupe I."/>
            <person name="Breitwieser F.P."/>
            <person name="Buerckstuemmer T."/>
            <person name="Bennett K.L."/>
            <person name="Superti-Furga G."/>
            <person name="Colinge J."/>
        </authorList>
    </citation>
    <scope>IDENTIFICATION BY MASS SPECTROMETRY [LARGE SCALE ANALYSIS]</scope>
</reference>
<reference key="25">
    <citation type="journal article" date="2011" name="Biochem. Biophys. Res. Commun.">
        <title>COMMD1 regulates the delta epithelial sodium channel (deltaENaC) through trafficking and ubiquitination.</title>
        <authorList>
            <person name="Chang T."/>
            <person name="Ke Y."/>
            <person name="Ly K."/>
            <person name="McDonald F.J."/>
        </authorList>
    </citation>
    <scope>FUNCTION</scope>
    <scope>SUBCELLULAR LOCATION</scope>
</reference>
<reference key="26">
    <citation type="journal article" date="2011" name="J. Biol. Chem.">
        <title>COMMD1 (copper metabolism MURR1 domain-containing protein 1) regulates Cullin RING ligases by preventing CAND1 (Cullin-associated Nedd8-dissociated protein 1) binding.</title>
        <authorList>
            <person name="Mao X."/>
            <person name="Gluck N."/>
            <person name="Chen B."/>
            <person name="Starokadomskyy P."/>
            <person name="Li H."/>
            <person name="Maine G.N."/>
            <person name="Burstein E."/>
        </authorList>
    </citation>
    <scope>FUNCTION</scope>
    <scope>INTERACTION WITH CUL1; CUL2; CUL3; CUL4A; CUL4B; CUL5 AND CUL7</scope>
    <scope>SUBCELLULAR LOCATION</scope>
</reference>
<reference key="27">
    <citation type="journal article" date="2011" name="PLoS ONE">
        <title>COMMD1-mediated ubiquitination regulates CFTR trafficking.</title>
        <authorList>
            <person name="Drevillon L."/>
            <person name="Tanguy G."/>
            <person name="Hinzpeter A."/>
            <person name="Arous N."/>
            <person name="de Becdelievre A."/>
            <person name="Aissat A."/>
            <person name="Tarze A."/>
            <person name="Goossens M."/>
            <person name="Fanen P."/>
        </authorList>
    </citation>
    <scope>FUNCTION</scope>
    <scope>INTERACTION WITH CFTR</scope>
    <scope>SUBCELLULAR LOCATION</scope>
</reference>
<reference key="28">
    <citation type="journal article" date="2012" name="Cell. Mol. Life Sci.">
        <title>The copper-transporting capacity of ATP7A mutants associated with Menkes disease is ameliorated by COMMD1 as a result of improved protein expression.</title>
        <authorList>
            <person name="Vonk W.I."/>
            <person name="de Bie P."/>
            <person name="Wichers C.G."/>
            <person name="van den Berghe P.V."/>
            <person name="van der Plaats R."/>
            <person name="Berger R."/>
            <person name="Wijmenga C."/>
            <person name="Klomp L.W."/>
            <person name="van de Sluis B."/>
        </authorList>
    </citation>
    <scope>INTERACTION WITH ATP7A</scope>
</reference>
<reference key="29">
    <citation type="journal article" date="2013" name="Am. J. Physiol.">
        <title>COMMD1 interacts with the COOH terminus of NKCC1 in Calu-3 airway epithelial cells to modulate NKCC1 ubiquitination.</title>
        <authorList>
            <person name="Smith L."/>
            <person name="Litman P."/>
            <person name="Liedtke C.M."/>
        </authorList>
    </citation>
    <scope>FUNCTION</scope>
    <scope>INTERACTION WITH SLC12A2</scope>
</reference>
<reference key="30">
    <citation type="journal article" date="2013" name="Am. J. Physiol.">
        <title>Functional interaction of COMMD3 and COMMD9 with the epithelial sodium channel.</title>
        <authorList>
            <person name="Liu Y.F."/>
            <person name="Swart M."/>
            <person name="Ke Y."/>
            <person name="Ly K."/>
            <person name="McDonald F.J."/>
        </authorList>
    </citation>
    <scope>INTERACTION WITH SCNN1B</scope>
</reference>
<reference key="31">
    <citation type="journal article" date="2013" name="J. Clin. Invest.">
        <title>CCDC22 deficiency in humans blunts activation of proinflammatory NF-kappaB signaling.</title>
        <authorList>
            <person name="Starokadomskyy P."/>
            <person name="Gluck N."/>
            <person name="Li H."/>
            <person name="Chen B."/>
            <person name="Wallis M."/>
            <person name="Maine G.N."/>
            <person name="Mao X."/>
            <person name="Zaidi I.W."/>
            <person name="Hein M.Y."/>
            <person name="McDonald F.J."/>
            <person name="Lenzner S."/>
            <person name="Zecha A."/>
            <person name="Ropers H.H."/>
            <person name="Kuss A.W."/>
            <person name="McGaughran J."/>
            <person name="Gecz J."/>
            <person name="Burstein E."/>
        </authorList>
    </citation>
    <scope>INTERACTION WITH CCDC22; CUL2 AND TCEB1</scope>
</reference>
<reference key="32">
    <citation type="journal article" date="2014" name="J. Cell Sci.">
        <title>p300-mediated acetylation of COMMD1 regulates its stability, and the ubiquitylation and nucleolar translocation of the RelA NF-kappaB subunit.</title>
        <authorList>
            <person name="O'Hara A."/>
            <person name="Simpson J."/>
            <person name="Morin P."/>
            <person name="Loveridge C.J."/>
            <person name="Williams A.C."/>
            <person name="Novo S.M."/>
            <person name="Stark L.A."/>
        </authorList>
    </citation>
    <scope>ACETYLATION BY EP300</scope>
    <scope>INTERACTION WITH RELA</scope>
</reference>
<reference key="33">
    <citation type="journal article" date="2015" name="Mol. Biol. Cell">
        <title>COMMD1 is linked to the WASH complex and regulates endosomal trafficking of the copper transporter ATP7A.</title>
        <authorList>
            <person name="Phillips-Krawczak C.A."/>
            <person name="Singla A."/>
            <person name="Starokadomskyy P."/>
            <person name="Deng Z."/>
            <person name="Osborne D.G."/>
            <person name="Li H."/>
            <person name="Dick C.J."/>
            <person name="Gomez T.S."/>
            <person name="Koenecke M."/>
            <person name="Zhang J.S."/>
            <person name="Dai H."/>
            <person name="Sifuentes-Dominguez L.F."/>
            <person name="Geng L.N."/>
            <person name="Kaufmann S.H."/>
            <person name="Hein M.Y."/>
            <person name="Wallis M."/>
            <person name="McGaughran J."/>
            <person name="Gecz J."/>
            <person name="van de Sluis B."/>
            <person name="Billadeau D.D."/>
            <person name="Burstein E."/>
        </authorList>
    </citation>
    <scope>FUNCTION</scope>
    <scope>IDENTIFICATION IN THE CCC COMPLEX</scope>
    <scope>SUBCELLULAR LOCATION</scope>
    <scope>SUBUNIT</scope>
</reference>
<reference key="34">
    <citation type="journal article" date="2015" name="Proteomics">
        <title>N-terminome analysis of the human mitochondrial proteome.</title>
        <authorList>
            <person name="Vaca Jacome A.S."/>
            <person name="Rabilloud T."/>
            <person name="Schaeffer-Reiss C."/>
            <person name="Rompais M."/>
            <person name="Ayoub D."/>
            <person name="Lane L."/>
            <person name="Bairoch A."/>
            <person name="Van Dorsselaer A."/>
            <person name="Carapito C."/>
        </authorList>
    </citation>
    <scope>IDENTIFICATION BY MASS SPECTROMETRY [LARGE SCALE ANALYSIS]</scope>
</reference>
<reference key="35">
    <citation type="journal article" date="2017" name="Nat. Cell Biol.">
        <title>Retriever is a multiprotein complex for retromer-independent endosomal cargo recycling.</title>
        <authorList>
            <person name="McNally K.E."/>
            <person name="Faulkner R."/>
            <person name="Steinberg F."/>
            <person name="Gallon M."/>
            <person name="Ghai R."/>
            <person name="Pim D."/>
            <person name="Langton P."/>
            <person name="Pearson N."/>
            <person name="Danson C.M."/>
            <person name="Naegele H."/>
            <person name="Morris L.L."/>
            <person name="Singla A."/>
            <person name="Overlee B.L."/>
            <person name="Heesom K.J."/>
            <person name="Sessions R."/>
            <person name="Banks L."/>
            <person name="Collins B.M."/>
            <person name="Berger I."/>
            <person name="Billadeau D.D."/>
            <person name="Burstein E."/>
            <person name="Cullen P.J."/>
        </authorList>
    </citation>
    <scope>INTERACTION WITH CCDC22 AND VSP35L</scope>
</reference>
<reference key="36">
    <citation type="journal article" date="2017" name="Oncogene">
        <title>A novel nuclear complex of DRR1, F-actin and COMMD1 involved in NF-kappaB degradation and cell growth suppression in neuroblastoma.</title>
        <authorList>
            <person name="Mu P."/>
            <person name="Akashi T."/>
            <person name="Lu F."/>
            <person name="Kishida S."/>
            <person name="Kadomatsu K."/>
        </authorList>
    </citation>
    <scope>FUNCTION</scope>
    <scope>INTERACTION WITH FAM107A</scope>
    <scope>SUBCELLULAR LOCATION</scope>
</reference>
<reference evidence="33" key="37">
    <citation type="journal article" date="2007" name="J. Mol. Biol.">
        <title>Solution structure of the COMMD1 N-terminal domain.</title>
        <authorList>
            <person name="Sommerhalter M."/>
            <person name="Zhang Y."/>
            <person name="Rosenzweig A.C."/>
        </authorList>
    </citation>
    <scope>STRUCTURE BY NMR OF 1-108</scope>
</reference>
<reference evidence="34 35" key="38">
    <citation type="journal article" date="2023" name="Cell">
        <title>Structure of the endosomal commander complex linked to Ritscher-Schinzel syndrome.</title>
        <authorList>
            <person name="Healy M.D."/>
            <person name="McNally K.E."/>
            <person name="Butkovic R."/>
            <person name="Chilton M."/>
            <person name="Kato K."/>
            <person name="Sacharz J."/>
            <person name="McConville C."/>
            <person name="Moody E.R.R."/>
            <person name="Shaw S."/>
            <person name="Planelles-Herrero V.J."/>
            <person name="Yadav S.K.N."/>
            <person name="Ross J."/>
            <person name="Borucu U."/>
            <person name="Palmer C.S."/>
            <person name="Chen K.E."/>
            <person name="Croll T.I."/>
            <person name="Hall R.J."/>
            <person name="Caruana N.J."/>
            <person name="Ghai R."/>
            <person name="Nguyen T.H.D."/>
            <person name="Heesom K.J."/>
            <person name="Saitoh S."/>
            <person name="Berger I."/>
            <person name="Schaffitzel C."/>
            <person name="Williams T.A."/>
            <person name="Stroud D.A."/>
            <person name="Derivery E."/>
            <person name="Collins B.M."/>
            <person name="Cullen P.J."/>
        </authorList>
    </citation>
    <scope>STRUCTURE BY ELECTRON MICROSCOPY (3.12 ANGSTROMS) OF THE CCC COMPLEX</scope>
    <scope>FUNCTION</scope>
    <scope>SUBUNIT</scope>
</reference>
<reference evidence="36" key="39">
    <citation type="journal article" date="2024" name="Nat. Struct. Mol. Biol.">
        <title>Structure and interactions of the endogenous human commander complex.</title>
        <authorList>
            <person name="Laulumaa S."/>
            <person name="Kumpula E.P."/>
            <person name="Huiskonen J.T."/>
            <person name="Varjosalo M."/>
        </authorList>
    </citation>
    <scope>STRUCTURE BY ELECTRON MICROSCOPY (2.90 ANGSTROMS) OF THE CCC COMPLEX</scope>
    <scope>FUNCTION</scope>
    <scope>SUBUNIT</scope>
</reference>
<comment type="function">
    <text evidence="5 6 7 8 9 10 14 16 17 18 19 21 22 23 26 27 29 30">Scaffold protein in the commander complex that is essential for endosomal recycling of transmembrane cargos; the commander complex is composed of the CCC subcomplex and the retriever subcomplex (PubMed:37172566, PubMed:38459129). Can modulate activity of cullin-RING E3 ubiquitin ligase (CRL) complexes by displacing CAND1; in vitro promotes CRL E3 activity and dissociates CAND1 from CUL1 and CUL2 (PubMed:21778237). Promotes ubiquitination of NF-kappa-B subunit RELA and its subsequent proteasomal degradation. Down-regulates NF-kappa-B activity (PubMed:15799966, PubMed:17183367, PubMed:20048074). Involved in the regulation of membrane expression and ubiquitination of SLC12A2 (PubMed:23515529). Modulates Na(+) transport in epithelial cells by regulation of apical cell surface expression of amiloride-sensitive sodium channel (ENaC) subunits and by promoting their ubiquitination presumably involving NEDD4L. Promotes the localization of SCNN1D to recycling endosomes (PubMed:14645214, PubMed:20237237, PubMed:21741370). Promotes CFTR cell surface expression through regulation of its ubiquitination (PubMed:21483833). Down-regulates SOD1 activity by interfering with its homodimerization (PubMed:20595380). Plays a role in copper ion homeostasis. Involved in copper-dependent ATP7A trafficking between the trans-Golgi network and vesicles in the cell periphery; the function is proposed to depend on its association within the CCC complex and cooperation with the WASH complex on early endosomes (PubMed:25355947). Can bind one copper ion per monomer (PubMed:17309234). May function to facilitate biliary copper excretion within hepatocytes. Binds to phosphatidylinositol 4,5-bisphosphate (PtdIns(4,5)P2) (PubMed:18940794). Involved in the regulation of HIF1A-mediated transcription; competes with ARNT/Hif-1-beta for binding to HIF1A resulting in decreased DNA binding and impaired transcriptional activation by HIF-1 (PubMed:20458141). Negatively regulates neuroblastoma G1/S phase cell cycle progression and cell proliferation by stimulating ubiquitination of NF-kappa-B subunit RELA and NF-kappa-B degradation in a FAM107A- and actin-dependent manner (PubMed:28604741).</text>
</comment>
<comment type="subunit">
    <text evidence="4 5 7 8 9 11 12 15 16 17 18 19 20 22 23 24 25 26 27 28 29 30">Component of the commander complex consisting of the CCC subcomplex and the retriever subcomplex (PubMed:37172566, PubMed:38459129, PubMed:25355947, PubMed:28892079, PubMed:15799966). Component of the CCC (COMMD/CCDC22/CCDC93) subcomplex consisting of COMMD1, COMMD2, COMMD3, COMMD4, COMMD5, COMMD6, COMMD7, COMMD8, COMMD9, COMMD10, CCDC22 and CCDC93; within the complex forms a heterodimer with COMMD6 (PubMed:37172566, PubMed:38459129, PubMed:15799966, PubMed:23563313, PubMed:25355947, PubMed:28892079). Interacts with VPS35L; the interaction associates the CCC complex with the retriever complex (PubMed:25355947, PubMed:28892079). Identified in a complex with an E3 ubiquitin ligase complex composed of TCEB1/elongin C, CUL2, SOCS1 and RBX1; in the complex interacts directly with SOCS1 and CUL2 (PubMed:17183367). Identified in a complex with NF-kappa-B (PubMed:16573520). Interacts directly with SLC12A2 (PubMed:23515529). Interacts directly with ATP7B (via the N-terminal region) (PubMed:12968035, PubMed:17919502). Interacts with ATP7A (PubMed:21667063). Interacts with FAM107A; this interaction stabilizes COMMD1 in the nucleus (PubMed:28604741). Interacts with CCS, CDKN2A, RELA, REL, RELB, NFKB1/p105, NFKB2/p100, NFKBIB, SCNN1D, SCNN1B, CFTR, CLU, SGK1, AKT1, CUL1, CUL2, CUL3, CUL4A, CUL4B, CUL5, CUL7, HIF1A (PubMed:14645214, PubMed:16573520, PubMed:18305112, PubMed:20237237, PubMed:20595380, PubMed:20458141, PubMed:20068069, PubMed:21778237, PubMed:21483833, PubMed:23637203, PubMed:23563313, PubMed:25074812).</text>
</comment>
<comment type="interaction">
    <interactant intactId="EBI-1550112">
        <id>Q8N668</id>
    </interactant>
    <interactant intactId="EBI-11668501">
        <id>P35670</id>
        <label>ATP7B</label>
    </interactant>
    <organismsDiffer>false</organismsDiffer>
    <experiments>10</experiments>
</comment>
<comment type="interaction">
    <interactant intactId="EBI-1550112">
        <id>Q8N668</id>
    </interactant>
    <interactant intactId="EBI-3943153">
        <id>O60826</id>
        <label>CCDC22</label>
    </interactant>
    <organismsDiffer>false</organismsDiffer>
    <experiments>34</experiments>
</comment>
<comment type="interaction">
    <interactant intactId="EBI-1550112">
        <id>Q8N668</id>
    </interactant>
    <interactant intactId="EBI-1104769">
        <id>Q567U6</id>
        <label>CCDC93</label>
    </interactant>
    <organismsDiffer>false</organismsDiffer>
    <experiments>18</experiments>
</comment>
<comment type="interaction">
    <interactant intactId="EBI-1550112">
        <id>Q8N668</id>
    </interactant>
    <interactant intactId="EBI-1550112">
        <id>Q8N668</id>
        <label>COMMD1</label>
    </interactant>
    <organismsDiffer>false</organismsDiffer>
    <experiments>2</experiments>
</comment>
<comment type="interaction">
    <interactant intactId="EBI-1550112">
        <id>Q8N668</id>
    </interactant>
    <interactant intactId="EBI-1550310">
        <id>Q9Y6G5</id>
        <label>COMMD10</label>
    </interactant>
    <organismsDiffer>false</organismsDiffer>
    <experiments>7</experiments>
</comment>
<comment type="interaction">
    <interactant intactId="EBI-1550112">
        <id>Q8N668</id>
    </interactant>
    <interactant intactId="EBI-1550220">
        <id>Q86X83</id>
        <label>COMMD2</label>
    </interactant>
    <organismsDiffer>false</organismsDiffer>
    <experiments>9</experiments>
</comment>
<comment type="interaction">
    <interactant intactId="EBI-1550112">
        <id>Q8N668</id>
    </interactant>
    <interactant intactId="EBI-714979">
        <id>Q9UBI1</id>
        <label>COMMD3</label>
    </interactant>
    <organismsDiffer>false</organismsDiffer>
    <experiments>11</experiments>
</comment>
<comment type="interaction">
    <interactant intactId="EBI-1550112">
        <id>Q8N668</id>
    </interactant>
    <interactant intactId="EBI-1550064">
        <id>Q9H0A8</id>
        <label>COMMD4</label>
    </interactant>
    <organismsDiffer>false</organismsDiffer>
    <experiments>11</experiments>
</comment>
<comment type="interaction">
    <interactant intactId="EBI-1550112">
        <id>Q8N668</id>
    </interactant>
    <interactant intactId="EBI-1550256">
        <id>Q9GZQ3</id>
        <label>COMMD5</label>
    </interactant>
    <organismsDiffer>false</organismsDiffer>
    <experiments>7</experiments>
</comment>
<comment type="interaction">
    <interactant intactId="EBI-1550112">
        <id>Q8N668</id>
    </interactant>
    <interactant intactId="EBI-1550081">
        <id>Q7Z4G1</id>
        <label>COMMD6</label>
    </interactant>
    <organismsDiffer>false</organismsDiffer>
    <experiments>28</experiments>
</comment>
<comment type="interaction">
    <interactant intactId="EBI-1550112">
        <id>Q8N668</id>
    </interactant>
    <interactant intactId="EBI-1550280">
        <id>Q86VX2</id>
        <label>COMMD7</label>
    </interactant>
    <organismsDiffer>false</organismsDiffer>
    <experiments>6</experiments>
</comment>
<comment type="interaction">
    <interactant intactId="EBI-1550112">
        <id>Q8N668</id>
    </interactant>
    <interactant intactId="EBI-725694">
        <id>Q9NX08</id>
        <label>COMMD8</label>
    </interactant>
    <organismsDiffer>false</organismsDiffer>
    <experiments>10</experiments>
</comment>
<comment type="interaction">
    <interactant intactId="EBI-1550112">
        <id>Q8N668</id>
    </interactant>
    <interactant intactId="EBI-456179">
        <id>Q13617</id>
        <label>CUL2</label>
    </interactant>
    <organismsDiffer>false</organismsDiffer>
    <experiments>6</experiments>
</comment>
<comment type="interaction">
    <interactant intactId="EBI-1550112">
        <id>Q8N668</id>
    </interactant>
    <interactant intactId="EBI-301231">
        <id>Q15369</id>
        <label>ELOC</label>
    </interactant>
    <organismsDiffer>false</organismsDiffer>
    <experiments>2</experiments>
</comment>
<comment type="interaction">
    <interactant intactId="EBI-1550112">
        <id>Q8N668</id>
    </interactant>
    <interactant intactId="EBI-1057009">
        <id>P26583</id>
        <label>HMGB2</label>
    </interactant>
    <organismsDiffer>false</organismsDiffer>
    <experiments>3</experiments>
</comment>
<comment type="interaction">
    <interactant intactId="EBI-1550112">
        <id>Q8N668</id>
    </interactant>
    <interactant intactId="EBI-307386">
        <id>P25963</id>
        <label>NFKBIA</label>
    </interactant>
    <organismsDiffer>false</organismsDiffer>
    <experiments>3</experiments>
</comment>
<comment type="interaction">
    <interactant intactId="EBI-1550112">
        <id>Q8N668</id>
    </interactant>
    <interactant intactId="EBI-307352">
        <id>Q04864</id>
        <label>REL</label>
    </interactant>
    <organismsDiffer>false</organismsDiffer>
    <experiments>3</experiments>
</comment>
<comment type="interaction">
    <interactant intactId="EBI-1550112">
        <id>Q8N668</id>
    </interactant>
    <interactant intactId="EBI-73886">
        <id>Q04206</id>
        <label>RELA</label>
    </interactant>
    <organismsDiffer>false</organismsDiffer>
    <experiments>7</experiments>
</comment>
<comment type="interaction">
    <interactant intactId="EBI-1550112">
        <id>Q8N668</id>
    </interactant>
    <interactant intactId="EBI-357837">
        <id>Q01201</id>
        <label>RELB</label>
    </interactant>
    <organismsDiffer>false</organismsDiffer>
    <experiments>2</experiments>
</comment>
<comment type="interaction">
    <interactant intactId="EBI-1550112">
        <id>Q8N668</id>
    </interactant>
    <interactant intactId="EBI-2547114">
        <id>P51172</id>
        <label>SCNN1D</label>
    </interactant>
    <organismsDiffer>false</organismsDiffer>
    <experiments>3</experiments>
</comment>
<comment type="interaction">
    <interactant intactId="EBI-1550112">
        <id>Q8N668</id>
    </interactant>
    <interactant intactId="EBI-968198">
        <id>O15524</id>
        <label>SOCS1</label>
    </interactant>
    <organismsDiffer>false</organismsDiffer>
    <experiments>3</experiments>
</comment>
<comment type="interaction">
    <interactant intactId="EBI-1550112">
        <id>Q8N668</id>
    </interactant>
    <interactant intactId="EBI-2116184">
        <id>Q8IYN2</id>
        <label>TCEAL8</label>
    </interactant>
    <organismsDiffer>false</organismsDiffer>
    <experiments>3</experiments>
</comment>
<comment type="interaction">
    <interactant intactId="EBI-1550112">
        <id>Q8N668</id>
    </interactant>
    <interactant intactId="EBI-742943">
        <id>Q96BW1</id>
        <label>UPRT</label>
    </interactant>
    <organismsDiffer>false</organismsDiffer>
    <experiments>3</experiments>
</comment>
<comment type="subcellular location">
    <subcellularLocation>
        <location evidence="22 27">Nucleus</location>
    </subcellularLocation>
    <subcellularLocation>
        <location evidence="22">Cytoplasm</location>
    </subcellularLocation>
    <subcellularLocation>
        <location evidence="13">Endosome membrane</location>
    </subcellularLocation>
    <subcellularLocation>
        <location evidence="13">Cytoplasmic vesicle</location>
    </subcellularLocation>
    <subcellularLocation>
        <location evidence="19 26">Early endosome</location>
    </subcellularLocation>
    <subcellularLocation>
        <location evidence="19 21">Recycling endosome</location>
    </subcellularLocation>
    <text>Shuttles between nucleus and cytosol. Detected in perinuclear foci that may be aggresomes containing misfolded, ubiquitinated proteins.</text>
</comment>
<comment type="alternative products">
    <event type="alternative splicing"/>
    <isoform>
        <id>Q8N668-1</id>
        <name>1</name>
        <sequence type="displayed"/>
    </isoform>
    <isoform>
        <id>Q8N668-2</id>
        <name>2</name>
        <sequence type="described" ref="VSP_055532"/>
    </isoform>
</comment>
<comment type="tissue specificity">
    <text evidence="3 7 8 17">Ubiquitous. Highest expression in the liver, with lower expression in brain, lung, placenta, pancreas, small intestine, heart, skeletal muscle, kidney and placenta. Down-regulated in cancer tissues.</text>
</comment>
<comment type="PTM">
    <text evidence="25">Acetylated by EP300 ina stimuli-specific manner; protecting it from XIAP-mediated proteasomal degradation and required for interaction with RElA in response to stress.</text>
</comment>
<comment type="PTM">
    <text evidence="6 12 15">Ubiquitinated; undergoes both 'Lys-63'- and 'Lys-48'-linked polyubiquitination. Ubiquitinated by XIAP, leading to its proteasomal degradation.</text>
</comment>
<comment type="similarity">
    <text evidence="32">Belongs to the COMM domain-containing protein 1 family.</text>
</comment>
<sequence>MAAGELEGGKPLSGLLNALAQDTFHGYPGITEELLRSQLYPEVPPEEFRPFLAKMRGILKSIASADMDFNQLEAFLTAQTKKQGGITSDQAAVISKFWKSHKTKIRESLMNQSRWNSGLRGLSWRVDGKSQSRHSAQIHTPVAIIELELGKYGQESEFLCLEFDEVKVNQILKTLSEVEESISTLISQPN</sequence>
<keyword id="KW-0002">3D-structure</keyword>
<keyword id="KW-0007">Acetylation</keyword>
<keyword id="KW-0025">Alternative splicing</keyword>
<keyword id="KW-0186">Copper</keyword>
<keyword id="KW-0963">Cytoplasm</keyword>
<keyword id="KW-0968">Cytoplasmic vesicle</keyword>
<keyword id="KW-0967">Endosome</keyword>
<keyword id="KW-0446">Lipid-binding</keyword>
<keyword id="KW-0472">Membrane</keyword>
<keyword id="KW-0479">Metal-binding</keyword>
<keyword id="KW-0539">Nucleus</keyword>
<keyword id="KW-0653">Protein transport</keyword>
<keyword id="KW-1267">Proteomics identification</keyword>
<keyword id="KW-1185">Reference proteome</keyword>
<keyword id="KW-0804">Transcription</keyword>
<keyword id="KW-0805">Transcription regulation</keyword>
<keyword id="KW-0813">Transport</keyword>
<keyword id="KW-0832">Ubl conjugation</keyword>
<keyword id="KW-0833">Ubl conjugation pathway</keyword>
<gene>
    <name type="primary">COMMD1</name>
    <name type="synonym">C2orf5</name>
    <name type="synonym">MURR1</name>
</gene>
<organism>
    <name type="scientific">Homo sapiens</name>
    <name type="common">Human</name>
    <dbReference type="NCBI Taxonomy" id="9606"/>
    <lineage>
        <taxon>Eukaryota</taxon>
        <taxon>Metazoa</taxon>
        <taxon>Chordata</taxon>
        <taxon>Craniata</taxon>
        <taxon>Vertebrata</taxon>
        <taxon>Euteleostomi</taxon>
        <taxon>Mammalia</taxon>
        <taxon>Eutheria</taxon>
        <taxon>Euarchontoglires</taxon>
        <taxon>Primates</taxon>
        <taxon>Haplorrhini</taxon>
        <taxon>Catarrhini</taxon>
        <taxon>Hominidae</taxon>
        <taxon>Homo</taxon>
    </lineage>
</organism>
<protein>
    <recommendedName>
        <fullName>COMM domain-containing protein 1</fullName>
    </recommendedName>
    <alternativeName>
        <fullName>Protein Murr1</fullName>
    </alternativeName>
</protein>